<dbReference type="EC" id="6.1.1.20" evidence="1"/>
<dbReference type="EMBL" id="AE015451">
    <property type="protein sequence ID" value="AAN68082.1"/>
    <property type="molecule type" value="Genomic_DNA"/>
</dbReference>
<dbReference type="RefSeq" id="NP_744618.1">
    <property type="nucleotide sequence ID" value="NC_002947.4"/>
</dbReference>
<dbReference type="RefSeq" id="WP_010953410.1">
    <property type="nucleotide sequence ID" value="NZ_CP169744.1"/>
</dbReference>
<dbReference type="SMR" id="Q88K22"/>
<dbReference type="STRING" id="160488.PP_2470"/>
<dbReference type="PaxDb" id="160488-PP_2470"/>
<dbReference type="GeneID" id="83681009"/>
<dbReference type="KEGG" id="ppu:PP_2470"/>
<dbReference type="PATRIC" id="fig|160488.4.peg.2616"/>
<dbReference type="eggNOG" id="COG0072">
    <property type="taxonomic scope" value="Bacteria"/>
</dbReference>
<dbReference type="HOGENOM" id="CLU_016891_0_0_6"/>
<dbReference type="OrthoDB" id="9805455at2"/>
<dbReference type="PhylomeDB" id="Q88K22"/>
<dbReference type="BioCyc" id="PPUT160488:G1G01-2641-MONOMER"/>
<dbReference type="Proteomes" id="UP000000556">
    <property type="component" value="Chromosome"/>
</dbReference>
<dbReference type="GO" id="GO:0009328">
    <property type="term" value="C:phenylalanine-tRNA ligase complex"/>
    <property type="evidence" value="ECO:0007669"/>
    <property type="project" value="TreeGrafter"/>
</dbReference>
<dbReference type="GO" id="GO:0005524">
    <property type="term" value="F:ATP binding"/>
    <property type="evidence" value="ECO:0007669"/>
    <property type="project" value="UniProtKB-UniRule"/>
</dbReference>
<dbReference type="GO" id="GO:0000287">
    <property type="term" value="F:magnesium ion binding"/>
    <property type="evidence" value="ECO:0007669"/>
    <property type="project" value="UniProtKB-UniRule"/>
</dbReference>
<dbReference type="GO" id="GO:0004826">
    <property type="term" value="F:phenylalanine-tRNA ligase activity"/>
    <property type="evidence" value="ECO:0007669"/>
    <property type="project" value="UniProtKB-UniRule"/>
</dbReference>
<dbReference type="GO" id="GO:0000049">
    <property type="term" value="F:tRNA binding"/>
    <property type="evidence" value="ECO:0007669"/>
    <property type="project" value="UniProtKB-KW"/>
</dbReference>
<dbReference type="GO" id="GO:0006432">
    <property type="term" value="P:phenylalanyl-tRNA aminoacylation"/>
    <property type="evidence" value="ECO:0007669"/>
    <property type="project" value="UniProtKB-UniRule"/>
</dbReference>
<dbReference type="CDD" id="cd00769">
    <property type="entry name" value="PheRS_beta_core"/>
    <property type="match status" value="1"/>
</dbReference>
<dbReference type="CDD" id="cd02796">
    <property type="entry name" value="tRNA_bind_bactPheRS"/>
    <property type="match status" value="1"/>
</dbReference>
<dbReference type="FunFam" id="2.40.50.140:FF:000045">
    <property type="entry name" value="Phenylalanine--tRNA ligase beta subunit"/>
    <property type="match status" value="1"/>
</dbReference>
<dbReference type="FunFam" id="3.30.56.10:FF:000002">
    <property type="entry name" value="Phenylalanine--tRNA ligase beta subunit"/>
    <property type="match status" value="1"/>
</dbReference>
<dbReference type="FunFam" id="3.30.70.380:FF:000001">
    <property type="entry name" value="Phenylalanine--tRNA ligase beta subunit"/>
    <property type="match status" value="1"/>
</dbReference>
<dbReference type="FunFam" id="3.30.930.10:FF:000022">
    <property type="entry name" value="Phenylalanine--tRNA ligase beta subunit"/>
    <property type="match status" value="1"/>
</dbReference>
<dbReference type="FunFam" id="3.50.40.10:FF:000001">
    <property type="entry name" value="Phenylalanine--tRNA ligase beta subunit"/>
    <property type="match status" value="1"/>
</dbReference>
<dbReference type="Gene3D" id="3.30.56.10">
    <property type="match status" value="2"/>
</dbReference>
<dbReference type="Gene3D" id="3.30.930.10">
    <property type="entry name" value="Bira Bifunctional Protein, Domain 2"/>
    <property type="match status" value="1"/>
</dbReference>
<dbReference type="Gene3D" id="3.30.70.380">
    <property type="entry name" value="Ferrodoxin-fold anticodon-binding domain"/>
    <property type="match status" value="1"/>
</dbReference>
<dbReference type="Gene3D" id="2.40.50.140">
    <property type="entry name" value="Nucleic acid-binding proteins"/>
    <property type="match status" value="1"/>
</dbReference>
<dbReference type="Gene3D" id="3.50.40.10">
    <property type="entry name" value="Phenylalanyl-trna Synthetase, Chain B, domain 3"/>
    <property type="match status" value="1"/>
</dbReference>
<dbReference type="HAMAP" id="MF_00283">
    <property type="entry name" value="Phe_tRNA_synth_beta1"/>
    <property type="match status" value="1"/>
</dbReference>
<dbReference type="InterPro" id="IPR045864">
    <property type="entry name" value="aa-tRNA-synth_II/BPL/LPL"/>
</dbReference>
<dbReference type="InterPro" id="IPR005146">
    <property type="entry name" value="B3/B4_tRNA-bd"/>
</dbReference>
<dbReference type="InterPro" id="IPR009061">
    <property type="entry name" value="DNA-bd_dom_put_sf"/>
</dbReference>
<dbReference type="InterPro" id="IPR005121">
    <property type="entry name" value="Fdx_antiC-bd"/>
</dbReference>
<dbReference type="InterPro" id="IPR036690">
    <property type="entry name" value="Fdx_antiC-bd_sf"/>
</dbReference>
<dbReference type="InterPro" id="IPR012340">
    <property type="entry name" value="NA-bd_OB-fold"/>
</dbReference>
<dbReference type="InterPro" id="IPR045060">
    <property type="entry name" value="Phe-tRNA-ligase_IIc_bsu"/>
</dbReference>
<dbReference type="InterPro" id="IPR004532">
    <property type="entry name" value="Phe-tRNA-ligase_IIc_bsu_bact"/>
</dbReference>
<dbReference type="InterPro" id="IPR020825">
    <property type="entry name" value="Phe-tRNA_synthase-like_B3/B4"/>
</dbReference>
<dbReference type="InterPro" id="IPR041616">
    <property type="entry name" value="PheRS_beta_core"/>
</dbReference>
<dbReference type="InterPro" id="IPR002547">
    <property type="entry name" value="tRNA-bd_dom"/>
</dbReference>
<dbReference type="InterPro" id="IPR033714">
    <property type="entry name" value="tRNA_bind_bactPheRS"/>
</dbReference>
<dbReference type="InterPro" id="IPR005147">
    <property type="entry name" value="tRNA_synthase_B5-dom"/>
</dbReference>
<dbReference type="NCBIfam" id="TIGR00472">
    <property type="entry name" value="pheT_bact"/>
    <property type="match status" value="1"/>
</dbReference>
<dbReference type="NCBIfam" id="NF045760">
    <property type="entry name" value="YtpR"/>
    <property type="match status" value="1"/>
</dbReference>
<dbReference type="PANTHER" id="PTHR10947:SF0">
    <property type="entry name" value="PHENYLALANINE--TRNA LIGASE BETA SUBUNIT"/>
    <property type="match status" value="1"/>
</dbReference>
<dbReference type="PANTHER" id="PTHR10947">
    <property type="entry name" value="PHENYLALANYL-TRNA SYNTHETASE BETA CHAIN AND LEUCINE-RICH REPEAT-CONTAINING PROTEIN 47"/>
    <property type="match status" value="1"/>
</dbReference>
<dbReference type="Pfam" id="PF03483">
    <property type="entry name" value="B3_4"/>
    <property type="match status" value="1"/>
</dbReference>
<dbReference type="Pfam" id="PF03484">
    <property type="entry name" value="B5"/>
    <property type="match status" value="1"/>
</dbReference>
<dbReference type="Pfam" id="PF03147">
    <property type="entry name" value="FDX-ACB"/>
    <property type="match status" value="1"/>
</dbReference>
<dbReference type="Pfam" id="PF01588">
    <property type="entry name" value="tRNA_bind"/>
    <property type="match status" value="1"/>
</dbReference>
<dbReference type="Pfam" id="PF17759">
    <property type="entry name" value="tRNA_synthFbeta"/>
    <property type="match status" value="1"/>
</dbReference>
<dbReference type="SMART" id="SM00873">
    <property type="entry name" value="B3_4"/>
    <property type="match status" value="1"/>
</dbReference>
<dbReference type="SMART" id="SM00874">
    <property type="entry name" value="B5"/>
    <property type="match status" value="1"/>
</dbReference>
<dbReference type="SMART" id="SM00896">
    <property type="entry name" value="FDX-ACB"/>
    <property type="match status" value="1"/>
</dbReference>
<dbReference type="SUPFAM" id="SSF54991">
    <property type="entry name" value="Anticodon-binding domain of PheRS"/>
    <property type="match status" value="1"/>
</dbReference>
<dbReference type="SUPFAM" id="SSF55681">
    <property type="entry name" value="Class II aaRS and biotin synthetases"/>
    <property type="match status" value="1"/>
</dbReference>
<dbReference type="SUPFAM" id="SSF50249">
    <property type="entry name" value="Nucleic acid-binding proteins"/>
    <property type="match status" value="1"/>
</dbReference>
<dbReference type="SUPFAM" id="SSF56037">
    <property type="entry name" value="PheT/TilS domain"/>
    <property type="match status" value="1"/>
</dbReference>
<dbReference type="SUPFAM" id="SSF46955">
    <property type="entry name" value="Putative DNA-binding domain"/>
    <property type="match status" value="1"/>
</dbReference>
<dbReference type="PROSITE" id="PS51483">
    <property type="entry name" value="B5"/>
    <property type="match status" value="1"/>
</dbReference>
<dbReference type="PROSITE" id="PS51447">
    <property type="entry name" value="FDX_ACB"/>
    <property type="match status" value="1"/>
</dbReference>
<dbReference type="PROSITE" id="PS50886">
    <property type="entry name" value="TRBD"/>
    <property type="match status" value="1"/>
</dbReference>
<feature type="chain" id="PRO_0000126933" description="Phenylalanine--tRNA ligase beta subunit">
    <location>
        <begin position="1"/>
        <end position="793"/>
    </location>
</feature>
<feature type="domain" description="tRNA-binding" evidence="1">
    <location>
        <begin position="39"/>
        <end position="147"/>
    </location>
</feature>
<feature type="domain" description="B5" evidence="1">
    <location>
        <begin position="401"/>
        <end position="477"/>
    </location>
</feature>
<feature type="domain" description="FDX-ACB" evidence="1">
    <location>
        <begin position="699"/>
        <end position="792"/>
    </location>
</feature>
<feature type="binding site" evidence="1">
    <location>
        <position position="455"/>
    </location>
    <ligand>
        <name>Mg(2+)</name>
        <dbReference type="ChEBI" id="CHEBI:18420"/>
        <note>shared with alpha subunit</note>
    </ligand>
</feature>
<feature type="binding site" evidence="1">
    <location>
        <position position="461"/>
    </location>
    <ligand>
        <name>Mg(2+)</name>
        <dbReference type="ChEBI" id="CHEBI:18420"/>
        <note>shared with alpha subunit</note>
    </ligand>
</feature>
<feature type="binding site" evidence="1">
    <location>
        <position position="464"/>
    </location>
    <ligand>
        <name>Mg(2+)</name>
        <dbReference type="ChEBI" id="CHEBI:18420"/>
        <note>shared with alpha subunit</note>
    </ligand>
</feature>
<feature type="binding site" evidence="1">
    <location>
        <position position="465"/>
    </location>
    <ligand>
        <name>Mg(2+)</name>
        <dbReference type="ChEBI" id="CHEBI:18420"/>
        <note>shared with alpha subunit</note>
    </ligand>
</feature>
<comment type="catalytic activity">
    <reaction evidence="1">
        <text>tRNA(Phe) + L-phenylalanine + ATP = L-phenylalanyl-tRNA(Phe) + AMP + diphosphate + H(+)</text>
        <dbReference type="Rhea" id="RHEA:19413"/>
        <dbReference type="Rhea" id="RHEA-COMP:9668"/>
        <dbReference type="Rhea" id="RHEA-COMP:9699"/>
        <dbReference type="ChEBI" id="CHEBI:15378"/>
        <dbReference type="ChEBI" id="CHEBI:30616"/>
        <dbReference type="ChEBI" id="CHEBI:33019"/>
        <dbReference type="ChEBI" id="CHEBI:58095"/>
        <dbReference type="ChEBI" id="CHEBI:78442"/>
        <dbReference type="ChEBI" id="CHEBI:78531"/>
        <dbReference type="ChEBI" id="CHEBI:456215"/>
        <dbReference type="EC" id="6.1.1.20"/>
    </reaction>
</comment>
<comment type="cofactor">
    <cofactor evidence="1">
        <name>Mg(2+)</name>
        <dbReference type="ChEBI" id="CHEBI:18420"/>
    </cofactor>
    <text evidence="1">Binds 2 magnesium ions per tetramer.</text>
</comment>
<comment type="subunit">
    <text evidence="1">Tetramer of two alpha and two beta subunits.</text>
</comment>
<comment type="subcellular location">
    <subcellularLocation>
        <location evidence="1">Cytoplasm</location>
    </subcellularLocation>
</comment>
<comment type="similarity">
    <text evidence="1">Belongs to the phenylalanyl-tRNA synthetase beta subunit family. Type 1 subfamily.</text>
</comment>
<reference key="1">
    <citation type="journal article" date="2002" name="Environ. Microbiol.">
        <title>Complete genome sequence and comparative analysis of the metabolically versatile Pseudomonas putida KT2440.</title>
        <authorList>
            <person name="Nelson K.E."/>
            <person name="Weinel C."/>
            <person name="Paulsen I.T."/>
            <person name="Dodson R.J."/>
            <person name="Hilbert H."/>
            <person name="Martins dos Santos V.A.P."/>
            <person name="Fouts D.E."/>
            <person name="Gill S.R."/>
            <person name="Pop M."/>
            <person name="Holmes M."/>
            <person name="Brinkac L.M."/>
            <person name="Beanan M.J."/>
            <person name="DeBoy R.T."/>
            <person name="Daugherty S.C."/>
            <person name="Kolonay J.F."/>
            <person name="Madupu R."/>
            <person name="Nelson W.C."/>
            <person name="White O."/>
            <person name="Peterson J.D."/>
            <person name="Khouri H.M."/>
            <person name="Hance I."/>
            <person name="Chris Lee P."/>
            <person name="Holtzapple E.K."/>
            <person name="Scanlan D."/>
            <person name="Tran K."/>
            <person name="Moazzez A."/>
            <person name="Utterback T.R."/>
            <person name="Rizzo M."/>
            <person name="Lee K."/>
            <person name="Kosack D."/>
            <person name="Moestl D."/>
            <person name="Wedler H."/>
            <person name="Lauber J."/>
            <person name="Stjepandic D."/>
            <person name="Hoheisel J."/>
            <person name="Straetz M."/>
            <person name="Heim S."/>
            <person name="Kiewitz C."/>
            <person name="Eisen J.A."/>
            <person name="Timmis K.N."/>
            <person name="Duesterhoeft A."/>
            <person name="Tuemmler B."/>
            <person name="Fraser C.M."/>
        </authorList>
    </citation>
    <scope>NUCLEOTIDE SEQUENCE [LARGE SCALE GENOMIC DNA]</scope>
    <source>
        <strain>ATCC 47054 / DSM 6125 / CFBP 8728 / NCIMB 11950 / KT2440</strain>
    </source>
</reference>
<protein>
    <recommendedName>
        <fullName evidence="1">Phenylalanine--tRNA ligase beta subunit</fullName>
        <ecNumber evidence="1">6.1.1.20</ecNumber>
    </recommendedName>
    <alternativeName>
        <fullName evidence="1">Phenylalanyl-tRNA synthetase beta subunit</fullName>
        <shortName evidence="1">PheRS</shortName>
    </alternativeName>
</protein>
<gene>
    <name evidence="1" type="primary">pheT</name>
    <name type="ordered locus">PP_2470</name>
</gene>
<accession>Q88K22</accession>
<proteinExistence type="inferred from homology"/>
<evidence type="ECO:0000255" key="1">
    <source>
        <dbReference type="HAMAP-Rule" id="MF_00283"/>
    </source>
</evidence>
<sequence length="793" mass="86618">MKFSEQWLRGWVNPQVSRDELVARLSMAGLEVDSVTPAAGQFSGIVVGEILATEQHPDADKLRVCQVSSGQETFQVVCGAPNARPGIKIPFAMIGAELPGDFKIKKAKLRGVESFGMLCSAAELQISEENDGLLELAADAPVGEDIRTYLSLDDASIEIGLTPNRGDCLSIAGLARDVSALYDTPVTRPVVPAVAAAHDEVRPVEVSAPAACPRYLGRVIRNVDLSKPTPLWMVERLRRSDVRSIDAAVDITNYVMLELGQPMHAFDLAEINGGIRVRMAEEGEKLVLLDGQEVALRADTLVIADHTRALAIAGVMGGEHSGVNTEKTRDLFLESAFFEPISVAGKARSYGLHTDASHRYERGVDSQLAREAMERATQLLLDIVGGEAGPVVEAVSEQHLPQVAPVTLRAERITQMLGMEMDPAQVEQLLNALELTTTKSGEGQWTVSVPSHRFDISLEVDLIEELARLYGYNNLPVRYPQARLAPQGKPETRGDLPTLRRLLVARGYQEAITYSFIDPKLFELFSPGVEPLLLANPISSDMAAMRASLWPGLVKALQHNLNRQQDRVRLFESGLRFVGQLGDLQQQPMIAGVITGSRLPEGWANGRDGVDFFDVKADVEALLGYSGALSDFTFSAGKHPALHPGQTAVIERDGKLVGYLGAIHPELAKALGLDRPVFLFELVLGDVVEGRLPKFSELSKFPETRRDLALIAGRDVASSAVLELIRDNAGEWLTDLRLFDVYQGKGIDPDRKSLAVGLTWQHPSRTLNDDEVNTTLQNILTSLEQRLNTTLRK</sequence>
<organism>
    <name type="scientific">Pseudomonas putida (strain ATCC 47054 / DSM 6125 / CFBP 8728 / NCIMB 11950 / KT2440)</name>
    <dbReference type="NCBI Taxonomy" id="160488"/>
    <lineage>
        <taxon>Bacteria</taxon>
        <taxon>Pseudomonadati</taxon>
        <taxon>Pseudomonadota</taxon>
        <taxon>Gammaproteobacteria</taxon>
        <taxon>Pseudomonadales</taxon>
        <taxon>Pseudomonadaceae</taxon>
        <taxon>Pseudomonas</taxon>
    </lineage>
</organism>
<keyword id="KW-0030">Aminoacyl-tRNA synthetase</keyword>
<keyword id="KW-0067">ATP-binding</keyword>
<keyword id="KW-0963">Cytoplasm</keyword>
<keyword id="KW-0436">Ligase</keyword>
<keyword id="KW-0460">Magnesium</keyword>
<keyword id="KW-0479">Metal-binding</keyword>
<keyword id="KW-0547">Nucleotide-binding</keyword>
<keyword id="KW-0648">Protein biosynthesis</keyword>
<keyword id="KW-1185">Reference proteome</keyword>
<keyword id="KW-0694">RNA-binding</keyword>
<keyword id="KW-0820">tRNA-binding</keyword>
<name>SYFB_PSEPK</name>